<name>PYRB_BEUC1</name>
<comment type="function">
    <text evidence="1">Catalyzes the condensation of carbamoyl phosphate and aspartate to form carbamoyl aspartate and inorganic phosphate, the committed step in the de novo pyrimidine nucleotide biosynthesis pathway.</text>
</comment>
<comment type="catalytic activity">
    <reaction evidence="1">
        <text>carbamoyl phosphate + L-aspartate = N-carbamoyl-L-aspartate + phosphate + H(+)</text>
        <dbReference type="Rhea" id="RHEA:20013"/>
        <dbReference type="ChEBI" id="CHEBI:15378"/>
        <dbReference type="ChEBI" id="CHEBI:29991"/>
        <dbReference type="ChEBI" id="CHEBI:32814"/>
        <dbReference type="ChEBI" id="CHEBI:43474"/>
        <dbReference type="ChEBI" id="CHEBI:58228"/>
        <dbReference type="EC" id="2.1.3.2"/>
    </reaction>
</comment>
<comment type="pathway">
    <text evidence="1">Pyrimidine metabolism; UMP biosynthesis via de novo pathway; (S)-dihydroorotate from bicarbonate: step 2/3.</text>
</comment>
<comment type="subunit">
    <text evidence="1">Heterododecamer (2C3:3R2) of six catalytic PyrB chains organized as two trimers (C3), and six regulatory PyrI chains organized as three dimers (R2).</text>
</comment>
<comment type="similarity">
    <text evidence="1">Belongs to the aspartate/ornithine carbamoyltransferase superfamily. ATCase family.</text>
</comment>
<reference key="1">
    <citation type="journal article" date="2009" name="Stand. Genomic Sci.">
        <title>Complete genome sequence of Beutenbergia cavernae type strain (HKI 0122).</title>
        <authorList>
            <person name="Land M."/>
            <person name="Pukall R."/>
            <person name="Abt B."/>
            <person name="Goker M."/>
            <person name="Rohde M."/>
            <person name="Glavina Del Rio T."/>
            <person name="Tice H."/>
            <person name="Copeland A."/>
            <person name="Cheng J.F."/>
            <person name="Lucas S."/>
            <person name="Chen F."/>
            <person name="Nolan M."/>
            <person name="Bruce D."/>
            <person name="Goodwin L."/>
            <person name="Pitluck S."/>
            <person name="Ivanova N."/>
            <person name="Mavromatis K."/>
            <person name="Ovchinnikova G."/>
            <person name="Pati A."/>
            <person name="Chen A."/>
            <person name="Palaniappan K."/>
            <person name="Hauser L."/>
            <person name="Chang Y.J."/>
            <person name="Jefferies C.C."/>
            <person name="Saunders E."/>
            <person name="Brettin T."/>
            <person name="Detter J.C."/>
            <person name="Han C."/>
            <person name="Chain P."/>
            <person name="Bristow J."/>
            <person name="Eisen J.A."/>
            <person name="Markowitz V."/>
            <person name="Hugenholtz P."/>
            <person name="Kyrpides N.C."/>
            <person name="Klenk H.P."/>
            <person name="Lapidus A."/>
        </authorList>
    </citation>
    <scope>NUCLEOTIDE SEQUENCE [LARGE SCALE GENOMIC DNA]</scope>
    <source>
        <strain>ATCC BAA-8 / DSM 12333 / CCUG 43141 / JCM 11478 / NBRC 16432 / NCIMB 13614 / HKI 0122</strain>
    </source>
</reference>
<accession>C5C683</accession>
<proteinExistence type="inferred from homology"/>
<organism>
    <name type="scientific">Beutenbergia cavernae (strain ATCC BAA-8 / DSM 12333 / CCUG 43141 / JCM 11478 / NBRC 16432 / NCIMB 13614 / HKI 0122)</name>
    <dbReference type="NCBI Taxonomy" id="471853"/>
    <lineage>
        <taxon>Bacteria</taxon>
        <taxon>Bacillati</taxon>
        <taxon>Actinomycetota</taxon>
        <taxon>Actinomycetes</taxon>
        <taxon>Micrococcales</taxon>
        <taxon>Beutenbergiaceae</taxon>
        <taxon>Beutenbergia</taxon>
    </lineage>
</organism>
<sequence length="332" mass="34907">MRHLLSAADLGRDEAVALLDTAETMADTQSRAIKKLPPLRGLTVVNLFFEDSTRTRISFEAAAKRLSADVINFSAKGSSVSKGESLKDTAQTLQAMGADAVVVRHWASGAPHRLAHAGWIAAPVINAGDGTHQHPTQALLDAFTLRRRLAGPDGPIGTDLAGRHVVVVGDVLHSRVARSNVDLLSTLGARVTLVAPPTLLPVGVESWPCEVGYDLDAAIDAGPDAVMMLRVQRERMSSGFFPSEREYARAYGLDAARVSRLGKHALVMHPGPMNRGLEISADAADSARSTVVEQVTNGVSVRMAVLYTLLAGGPDGDSTTSPGSGPEGGTTP</sequence>
<feature type="chain" id="PRO_1000201584" description="Aspartate carbamoyltransferase catalytic subunit">
    <location>
        <begin position="1"/>
        <end position="332"/>
    </location>
</feature>
<feature type="region of interest" description="Disordered" evidence="2">
    <location>
        <begin position="312"/>
        <end position="332"/>
    </location>
</feature>
<feature type="binding site" evidence="1">
    <location>
        <position position="54"/>
    </location>
    <ligand>
        <name>carbamoyl phosphate</name>
        <dbReference type="ChEBI" id="CHEBI:58228"/>
    </ligand>
</feature>
<feature type="binding site" evidence="1">
    <location>
        <position position="55"/>
    </location>
    <ligand>
        <name>carbamoyl phosphate</name>
        <dbReference type="ChEBI" id="CHEBI:58228"/>
    </ligand>
</feature>
<feature type="binding site" evidence="1">
    <location>
        <position position="82"/>
    </location>
    <ligand>
        <name>L-aspartate</name>
        <dbReference type="ChEBI" id="CHEBI:29991"/>
    </ligand>
</feature>
<feature type="binding site" evidence="1">
    <location>
        <position position="104"/>
    </location>
    <ligand>
        <name>carbamoyl phosphate</name>
        <dbReference type="ChEBI" id="CHEBI:58228"/>
    </ligand>
</feature>
<feature type="binding site" evidence="1">
    <location>
        <position position="134"/>
    </location>
    <ligand>
        <name>carbamoyl phosphate</name>
        <dbReference type="ChEBI" id="CHEBI:58228"/>
    </ligand>
</feature>
<feature type="binding site" evidence="1">
    <location>
        <position position="137"/>
    </location>
    <ligand>
        <name>carbamoyl phosphate</name>
        <dbReference type="ChEBI" id="CHEBI:58228"/>
    </ligand>
</feature>
<feature type="binding site" evidence="1">
    <location>
        <position position="175"/>
    </location>
    <ligand>
        <name>L-aspartate</name>
        <dbReference type="ChEBI" id="CHEBI:29991"/>
    </ligand>
</feature>
<feature type="binding site" evidence="1">
    <location>
        <position position="230"/>
    </location>
    <ligand>
        <name>L-aspartate</name>
        <dbReference type="ChEBI" id="CHEBI:29991"/>
    </ligand>
</feature>
<feature type="binding site" evidence="1">
    <location>
        <position position="271"/>
    </location>
    <ligand>
        <name>carbamoyl phosphate</name>
        <dbReference type="ChEBI" id="CHEBI:58228"/>
    </ligand>
</feature>
<feature type="binding site" evidence="1">
    <location>
        <position position="272"/>
    </location>
    <ligand>
        <name>carbamoyl phosphate</name>
        <dbReference type="ChEBI" id="CHEBI:58228"/>
    </ligand>
</feature>
<dbReference type="EC" id="2.1.3.2" evidence="1"/>
<dbReference type="EMBL" id="CP001618">
    <property type="protein sequence ID" value="ACQ80289.1"/>
    <property type="molecule type" value="Genomic_DNA"/>
</dbReference>
<dbReference type="RefSeq" id="WP_015882529.1">
    <property type="nucleotide sequence ID" value="NC_012669.1"/>
</dbReference>
<dbReference type="SMR" id="C5C683"/>
<dbReference type="STRING" id="471853.Bcav_2034"/>
<dbReference type="KEGG" id="bcv:Bcav_2034"/>
<dbReference type="eggNOG" id="COG0540">
    <property type="taxonomic scope" value="Bacteria"/>
</dbReference>
<dbReference type="HOGENOM" id="CLU_043846_2_0_11"/>
<dbReference type="OrthoDB" id="9774690at2"/>
<dbReference type="UniPathway" id="UPA00070">
    <property type="reaction ID" value="UER00116"/>
</dbReference>
<dbReference type="Proteomes" id="UP000007962">
    <property type="component" value="Chromosome"/>
</dbReference>
<dbReference type="GO" id="GO:0005829">
    <property type="term" value="C:cytosol"/>
    <property type="evidence" value="ECO:0007669"/>
    <property type="project" value="TreeGrafter"/>
</dbReference>
<dbReference type="GO" id="GO:0016597">
    <property type="term" value="F:amino acid binding"/>
    <property type="evidence" value="ECO:0007669"/>
    <property type="project" value="InterPro"/>
</dbReference>
<dbReference type="GO" id="GO:0004070">
    <property type="term" value="F:aspartate carbamoyltransferase activity"/>
    <property type="evidence" value="ECO:0007669"/>
    <property type="project" value="UniProtKB-UniRule"/>
</dbReference>
<dbReference type="GO" id="GO:0006207">
    <property type="term" value="P:'de novo' pyrimidine nucleobase biosynthetic process"/>
    <property type="evidence" value="ECO:0007669"/>
    <property type="project" value="InterPro"/>
</dbReference>
<dbReference type="GO" id="GO:0044205">
    <property type="term" value="P:'de novo' UMP biosynthetic process"/>
    <property type="evidence" value="ECO:0007669"/>
    <property type="project" value="UniProtKB-UniRule"/>
</dbReference>
<dbReference type="GO" id="GO:0006520">
    <property type="term" value="P:amino acid metabolic process"/>
    <property type="evidence" value="ECO:0007669"/>
    <property type="project" value="InterPro"/>
</dbReference>
<dbReference type="FunFam" id="3.40.50.1370:FF:000007">
    <property type="entry name" value="Aspartate carbamoyltransferase"/>
    <property type="match status" value="1"/>
</dbReference>
<dbReference type="FunFam" id="3.40.50.1370:FF:000012">
    <property type="entry name" value="Aspartate carbamoyltransferase"/>
    <property type="match status" value="1"/>
</dbReference>
<dbReference type="Gene3D" id="3.40.50.1370">
    <property type="entry name" value="Aspartate/ornithine carbamoyltransferase"/>
    <property type="match status" value="2"/>
</dbReference>
<dbReference type="HAMAP" id="MF_00001">
    <property type="entry name" value="Asp_carb_tr"/>
    <property type="match status" value="1"/>
</dbReference>
<dbReference type="InterPro" id="IPR006132">
    <property type="entry name" value="Asp/Orn_carbamoyltranf_P-bd"/>
</dbReference>
<dbReference type="InterPro" id="IPR006130">
    <property type="entry name" value="Asp/Orn_carbamoylTrfase"/>
</dbReference>
<dbReference type="InterPro" id="IPR036901">
    <property type="entry name" value="Asp/Orn_carbamoylTrfase_sf"/>
</dbReference>
<dbReference type="InterPro" id="IPR002082">
    <property type="entry name" value="Asp_carbamoyltransf"/>
</dbReference>
<dbReference type="InterPro" id="IPR006131">
    <property type="entry name" value="Asp_carbamoyltransf_Asp/Orn-bd"/>
</dbReference>
<dbReference type="NCBIfam" id="TIGR00670">
    <property type="entry name" value="asp_carb_tr"/>
    <property type="match status" value="1"/>
</dbReference>
<dbReference type="NCBIfam" id="NF002032">
    <property type="entry name" value="PRK00856.1"/>
    <property type="match status" value="1"/>
</dbReference>
<dbReference type="PANTHER" id="PTHR45753:SF6">
    <property type="entry name" value="ASPARTATE CARBAMOYLTRANSFERASE"/>
    <property type="match status" value="1"/>
</dbReference>
<dbReference type="PANTHER" id="PTHR45753">
    <property type="entry name" value="ORNITHINE CARBAMOYLTRANSFERASE, MITOCHONDRIAL"/>
    <property type="match status" value="1"/>
</dbReference>
<dbReference type="Pfam" id="PF00185">
    <property type="entry name" value="OTCace"/>
    <property type="match status" value="1"/>
</dbReference>
<dbReference type="Pfam" id="PF02729">
    <property type="entry name" value="OTCace_N"/>
    <property type="match status" value="1"/>
</dbReference>
<dbReference type="PRINTS" id="PR00100">
    <property type="entry name" value="AOTCASE"/>
</dbReference>
<dbReference type="PRINTS" id="PR00101">
    <property type="entry name" value="ATCASE"/>
</dbReference>
<dbReference type="SUPFAM" id="SSF53671">
    <property type="entry name" value="Aspartate/ornithine carbamoyltransferase"/>
    <property type="match status" value="1"/>
</dbReference>
<dbReference type="PROSITE" id="PS00097">
    <property type="entry name" value="CARBAMOYLTRANSFERASE"/>
    <property type="match status" value="1"/>
</dbReference>
<gene>
    <name evidence="1" type="primary">pyrB</name>
    <name type="ordered locus">Bcav_2034</name>
</gene>
<evidence type="ECO:0000255" key="1">
    <source>
        <dbReference type="HAMAP-Rule" id="MF_00001"/>
    </source>
</evidence>
<evidence type="ECO:0000256" key="2">
    <source>
        <dbReference type="SAM" id="MobiDB-lite"/>
    </source>
</evidence>
<protein>
    <recommendedName>
        <fullName evidence="1">Aspartate carbamoyltransferase catalytic subunit</fullName>
        <ecNumber evidence="1">2.1.3.2</ecNumber>
    </recommendedName>
    <alternativeName>
        <fullName evidence="1">Aspartate transcarbamylase</fullName>
        <shortName evidence="1">ATCase</shortName>
    </alternativeName>
</protein>
<keyword id="KW-0665">Pyrimidine biosynthesis</keyword>
<keyword id="KW-1185">Reference proteome</keyword>
<keyword id="KW-0808">Transferase</keyword>